<proteinExistence type="inferred from homology"/>
<gene>
    <name evidence="1" type="primary">tgt</name>
    <name type="ordered locus">Hac_0541</name>
</gene>
<evidence type="ECO:0000255" key="1">
    <source>
        <dbReference type="HAMAP-Rule" id="MF_00168"/>
    </source>
</evidence>
<comment type="function">
    <text evidence="1">Catalyzes the base-exchange of a guanine (G) residue with the queuine precursor 7-aminomethyl-7-deazaguanine (PreQ1) at position 34 (anticodon wobble position) in tRNAs with GU(N) anticodons (tRNA-Asp, -Asn, -His and -Tyr). Catalysis occurs through a double-displacement mechanism. The nucleophile active site attacks the C1' of nucleotide 34 to detach the guanine base from the RNA, forming a covalent enzyme-RNA intermediate. The proton acceptor active site deprotonates the incoming PreQ1, allowing a nucleophilic attack on the C1' of the ribose to form the product. After dissociation, two additional enzymatic reactions on the tRNA convert PreQ1 to queuine (Q), resulting in the hypermodified nucleoside queuosine (7-(((4,5-cis-dihydroxy-2-cyclopenten-1-yl)amino)methyl)-7-deazaguanosine).</text>
</comment>
<comment type="catalytic activity">
    <reaction evidence="1">
        <text>7-aminomethyl-7-carbaguanine + guanosine(34) in tRNA = 7-aminomethyl-7-carbaguanosine(34) in tRNA + guanine</text>
        <dbReference type="Rhea" id="RHEA:24104"/>
        <dbReference type="Rhea" id="RHEA-COMP:10341"/>
        <dbReference type="Rhea" id="RHEA-COMP:10342"/>
        <dbReference type="ChEBI" id="CHEBI:16235"/>
        <dbReference type="ChEBI" id="CHEBI:58703"/>
        <dbReference type="ChEBI" id="CHEBI:74269"/>
        <dbReference type="ChEBI" id="CHEBI:82833"/>
        <dbReference type="EC" id="2.4.2.29"/>
    </reaction>
</comment>
<comment type="cofactor">
    <cofactor evidence="1">
        <name>Zn(2+)</name>
        <dbReference type="ChEBI" id="CHEBI:29105"/>
    </cofactor>
    <text evidence="1">Binds 1 zinc ion per subunit.</text>
</comment>
<comment type="pathway">
    <text evidence="1">tRNA modification; tRNA-queuosine biosynthesis.</text>
</comment>
<comment type="subunit">
    <text evidence="1">Homodimer. Within each dimer, one monomer is responsible for RNA recognition and catalysis, while the other monomer binds to the replacement base PreQ1.</text>
</comment>
<comment type="similarity">
    <text evidence="1">Belongs to the queuine tRNA-ribosyltransferase family.</text>
</comment>
<name>TGT_HELAH</name>
<organism>
    <name type="scientific">Helicobacter acinonychis (strain Sheeba)</name>
    <dbReference type="NCBI Taxonomy" id="382638"/>
    <lineage>
        <taxon>Bacteria</taxon>
        <taxon>Pseudomonadati</taxon>
        <taxon>Campylobacterota</taxon>
        <taxon>Epsilonproteobacteria</taxon>
        <taxon>Campylobacterales</taxon>
        <taxon>Helicobacteraceae</taxon>
        <taxon>Helicobacter</taxon>
    </lineage>
</organism>
<feature type="chain" id="PRO_1000016802" description="Queuine tRNA-ribosyltransferase">
    <location>
        <begin position="1"/>
        <end position="371"/>
    </location>
</feature>
<feature type="region of interest" description="RNA binding" evidence="1">
    <location>
        <begin position="246"/>
        <end position="252"/>
    </location>
</feature>
<feature type="region of interest" description="RNA binding; important for wobble base 34 recognition" evidence="1">
    <location>
        <begin position="270"/>
        <end position="274"/>
    </location>
</feature>
<feature type="active site" description="Proton acceptor" evidence="1">
    <location>
        <position position="90"/>
    </location>
</feature>
<feature type="active site" description="Nucleophile" evidence="1">
    <location>
        <position position="265"/>
    </location>
</feature>
<feature type="binding site" evidence="1">
    <location>
        <begin position="90"/>
        <end position="94"/>
    </location>
    <ligand>
        <name>substrate</name>
    </ligand>
</feature>
<feature type="binding site" evidence="1">
    <location>
        <position position="144"/>
    </location>
    <ligand>
        <name>substrate</name>
    </ligand>
</feature>
<feature type="binding site" evidence="1">
    <location>
        <position position="189"/>
    </location>
    <ligand>
        <name>substrate</name>
    </ligand>
</feature>
<feature type="binding site" evidence="1">
    <location>
        <position position="215"/>
    </location>
    <ligand>
        <name>substrate</name>
    </ligand>
</feature>
<feature type="binding site" evidence="1">
    <location>
        <position position="303"/>
    </location>
    <ligand>
        <name>Zn(2+)</name>
        <dbReference type="ChEBI" id="CHEBI:29105"/>
    </ligand>
</feature>
<feature type="binding site" evidence="1">
    <location>
        <position position="305"/>
    </location>
    <ligand>
        <name>Zn(2+)</name>
        <dbReference type="ChEBI" id="CHEBI:29105"/>
    </ligand>
</feature>
<feature type="binding site" evidence="1">
    <location>
        <position position="308"/>
    </location>
    <ligand>
        <name>Zn(2+)</name>
        <dbReference type="ChEBI" id="CHEBI:29105"/>
    </ligand>
</feature>
<feature type="binding site" evidence="1">
    <location>
        <position position="334"/>
    </location>
    <ligand>
        <name>Zn(2+)</name>
        <dbReference type="ChEBI" id="CHEBI:29105"/>
    </ligand>
</feature>
<reference key="1">
    <citation type="journal article" date="2006" name="PLoS Genet.">
        <title>Who ate whom? Adaptive Helicobacter genomic changes that accompanied a host jump from early humans to large felines.</title>
        <authorList>
            <person name="Eppinger M."/>
            <person name="Baar C."/>
            <person name="Linz B."/>
            <person name="Raddatz G."/>
            <person name="Lanz C."/>
            <person name="Keller H."/>
            <person name="Morelli G."/>
            <person name="Gressmann H."/>
            <person name="Achtman M."/>
            <person name="Schuster S.C."/>
        </authorList>
    </citation>
    <scope>NUCLEOTIDE SEQUENCE [LARGE SCALE GENOMIC DNA]</scope>
    <source>
        <strain>Sheeba</strain>
    </source>
</reference>
<protein>
    <recommendedName>
        <fullName evidence="1">Queuine tRNA-ribosyltransferase</fullName>
        <ecNumber evidence="1">2.4.2.29</ecNumber>
    </recommendedName>
    <alternativeName>
        <fullName evidence="1">Guanine insertion enzyme</fullName>
    </alternativeName>
    <alternativeName>
        <fullName evidence="1">tRNA-guanine transglycosylase</fullName>
    </alternativeName>
</protein>
<sequence>MDFQLQAVDKHARAGILNLVHSQVETPIFMPVGTQGCIKSLDAIDMQERLSAKLILANTYHMYLRPGEKVIEQLGGLHHFAQFHGSFLTDSGGFQAFSLSDNVKLQEDGIVFKSHLDGSKHFFTPTKVLDIQYSLNSDIMMVLDDLVGLPAPLKRLEESIKRSAKWANISLEYHKENNRPNNNLFAIIQGGTHLKMRSLSVGLTHGGFDGYAIGGLAVGESTNEMLETIAHTAPLLPKDKPRYLMGVGTPENILDAISLGVDMFDCVMPTRNARNATLFTHSGKISIKNAPYKLDNTPIEENCTCYTCKRYSKAYLHHLFRAKELTYARLASLHNLHFYLELVKNARNAILEKRFLSFKKEFLERYTMDRQ</sequence>
<dbReference type="EC" id="2.4.2.29" evidence="1"/>
<dbReference type="EMBL" id="AM260522">
    <property type="protein sequence ID" value="CAJ99361.1"/>
    <property type="molecule type" value="Genomic_DNA"/>
</dbReference>
<dbReference type="RefSeq" id="WP_011577475.1">
    <property type="nucleotide sequence ID" value="NC_008229.1"/>
</dbReference>
<dbReference type="SMR" id="Q17YB5"/>
<dbReference type="STRING" id="382638.Hac_0541"/>
<dbReference type="GeneID" id="31758022"/>
<dbReference type="KEGG" id="hac:Hac_0541"/>
<dbReference type="eggNOG" id="COG0343">
    <property type="taxonomic scope" value="Bacteria"/>
</dbReference>
<dbReference type="HOGENOM" id="CLU_022060_0_1_7"/>
<dbReference type="OrthoDB" id="9805417at2"/>
<dbReference type="BioCyc" id="HACI382638:HAC_RS02390-MONOMER"/>
<dbReference type="UniPathway" id="UPA00392"/>
<dbReference type="Proteomes" id="UP000000775">
    <property type="component" value="Chromosome"/>
</dbReference>
<dbReference type="GO" id="GO:0005829">
    <property type="term" value="C:cytosol"/>
    <property type="evidence" value="ECO:0007669"/>
    <property type="project" value="TreeGrafter"/>
</dbReference>
<dbReference type="GO" id="GO:0046872">
    <property type="term" value="F:metal ion binding"/>
    <property type="evidence" value="ECO:0007669"/>
    <property type="project" value="UniProtKB-KW"/>
</dbReference>
<dbReference type="GO" id="GO:0008479">
    <property type="term" value="F:tRNA-guanosine(34) queuine transglycosylase activity"/>
    <property type="evidence" value="ECO:0007669"/>
    <property type="project" value="UniProtKB-UniRule"/>
</dbReference>
<dbReference type="GO" id="GO:0008616">
    <property type="term" value="P:queuosine biosynthetic process"/>
    <property type="evidence" value="ECO:0007669"/>
    <property type="project" value="UniProtKB-UniRule"/>
</dbReference>
<dbReference type="GO" id="GO:0101030">
    <property type="term" value="P:tRNA-guanine transglycosylation"/>
    <property type="evidence" value="ECO:0007669"/>
    <property type="project" value="InterPro"/>
</dbReference>
<dbReference type="Gene3D" id="3.20.20.105">
    <property type="entry name" value="Queuine tRNA-ribosyltransferase-like"/>
    <property type="match status" value="1"/>
</dbReference>
<dbReference type="HAMAP" id="MF_00168">
    <property type="entry name" value="Q_tRNA_Tgt"/>
    <property type="match status" value="1"/>
</dbReference>
<dbReference type="InterPro" id="IPR004803">
    <property type="entry name" value="TGT"/>
</dbReference>
<dbReference type="InterPro" id="IPR036511">
    <property type="entry name" value="TGT-like_sf"/>
</dbReference>
<dbReference type="InterPro" id="IPR002616">
    <property type="entry name" value="tRNA_ribo_trans-like"/>
</dbReference>
<dbReference type="NCBIfam" id="TIGR00430">
    <property type="entry name" value="Q_tRNA_tgt"/>
    <property type="match status" value="1"/>
</dbReference>
<dbReference type="NCBIfam" id="TIGR00449">
    <property type="entry name" value="tgt_general"/>
    <property type="match status" value="1"/>
</dbReference>
<dbReference type="PANTHER" id="PTHR43530">
    <property type="entry name" value="QUEUINE TRNA-RIBOSYLTRANSFERASE CATALYTIC SUBUNIT 1"/>
    <property type="match status" value="1"/>
</dbReference>
<dbReference type="PANTHER" id="PTHR43530:SF1">
    <property type="entry name" value="QUEUINE TRNA-RIBOSYLTRANSFERASE CATALYTIC SUBUNIT 1"/>
    <property type="match status" value="1"/>
</dbReference>
<dbReference type="Pfam" id="PF01702">
    <property type="entry name" value="TGT"/>
    <property type="match status" value="1"/>
</dbReference>
<dbReference type="SUPFAM" id="SSF51713">
    <property type="entry name" value="tRNA-guanine transglycosylase"/>
    <property type="match status" value="1"/>
</dbReference>
<accession>Q17YB5</accession>
<keyword id="KW-0328">Glycosyltransferase</keyword>
<keyword id="KW-0479">Metal-binding</keyword>
<keyword id="KW-0671">Queuosine biosynthesis</keyword>
<keyword id="KW-0808">Transferase</keyword>
<keyword id="KW-0819">tRNA processing</keyword>
<keyword id="KW-0862">Zinc</keyword>